<dbReference type="EC" id="2.1.1.-" evidence="1"/>
<dbReference type="EMBL" id="AAFI02000020">
    <property type="protein sequence ID" value="EAL68702.1"/>
    <property type="molecule type" value="Genomic_DNA"/>
</dbReference>
<dbReference type="RefSeq" id="XP_642670.1">
    <property type="nucleotide sequence ID" value="XM_637578.1"/>
</dbReference>
<dbReference type="SMR" id="Q76NT0"/>
<dbReference type="FunCoup" id="Q76NT0">
    <property type="interactions" value="33"/>
</dbReference>
<dbReference type="STRING" id="44689.Q76NT0"/>
<dbReference type="GlyGen" id="Q76NT0">
    <property type="glycosylation" value="1 site"/>
</dbReference>
<dbReference type="PaxDb" id="44689-DDB0169271"/>
<dbReference type="EnsemblProtists" id="EAL68702">
    <property type="protein sequence ID" value="EAL68702"/>
    <property type="gene ID" value="DDB_G0277479"/>
</dbReference>
<dbReference type="GeneID" id="8621087"/>
<dbReference type="KEGG" id="ddi:DDB_G0277479"/>
<dbReference type="dictyBase" id="DDB_G0277479"/>
<dbReference type="VEuPathDB" id="AmoebaDB:DDB_G0277479"/>
<dbReference type="eggNOG" id="KOG0838">
    <property type="taxonomic scope" value="Eukaryota"/>
</dbReference>
<dbReference type="HOGENOM" id="CLU_513327_0_0_1"/>
<dbReference type="InParanoid" id="Q76NT0"/>
<dbReference type="OMA" id="QETNNYR"/>
<dbReference type="PRO" id="PR:Q76NT0"/>
<dbReference type="Proteomes" id="UP000002195">
    <property type="component" value="Chromosome 2"/>
</dbReference>
<dbReference type="GO" id="GO:0005739">
    <property type="term" value="C:mitochondrion"/>
    <property type="evidence" value="ECO:0000318"/>
    <property type="project" value="GO_Central"/>
</dbReference>
<dbReference type="GO" id="GO:0003723">
    <property type="term" value="F:RNA binding"/>
    <property type="evidence" value="ECO:0007669"/>
    <property type="project" value="InterPro"/>
</dbReference>
<dbReference type="GO" id="GO:0016435">
    <property type="term" value="F:rRNA (guanine) methyltransferase activity"/>
    <property type="evidence" value="ECO:0000318"/>
    <property type="project" value="GO_Central"/>
</dbReference>
<dbReference type="GO" id="GO:0008650">
    <property type="term" value="F:rRNA (uridine-2'-O-)-methyltransferase activity"/>
    <property type="evidence" value="ECO:0007669"/>
    <property type="project" value="RHEA"/>
</dbReference>
<dbReference type="GO" id="GO:0000154">
    <property type="term" value="P:rRNA modification"/>
    <property type="evidence" value="ECO:0000318"/>
    <property type="project" value="GO_Central"/>
</dbReference>
<dbReference type="CDD" id="cd18105">
    <property type="entry name" value="SpoU-like_MRM1"/>
    <property type="match status" value="1"/>
</dbReference>
<dbReference type="Gene3D" id="3.30.1330.30">
    <property type="match status" value="1"/>
</dbReference>
<dbReference type="Gene3D" id="3.40.1280.10">
    <property type="match status" value="1"/>
</dbReference>
<dbReference type="InterPro" id="IPR029028">
    <property type="entry name" value="Alpha/beta_knot_MTases"/>
</dbReference>
<dbReference type="InterPro" id="IPR047182">
    <property type="entry name" value="MRM1"/>
</dbReference>
<dbReference type="InterPro" id="IPR047261">
    <property type="entry name" value="MRM1_MeTrfase_dom"/>
</dbReference>
<dbReference type="InterPro" id="IPR029064">
    <property type="entry name" value="Ribosomal_eL30-like_sf"/>
</dbReference>
<dbReference type="InterPro" id="IPR001537">
    <property type="entry name" value="SpoU_MeTrfase"/>
</dbReference>
<dbReference type="InterPro" id="IPR013123">
    <property type="entry name" value="SpoU_subst-bd"/>
</dbReference>
<dbReference type="InterPro" id="IPR029026">
    <property type="entry name" value="tRNA_m1G_MTases_N"/>
</dbReference>
<dbReference type="PANTHER" id="PTHR46103">
    <property type="entry name" value="RRNA METHYLTRANSFERASE 1, MITOCHONDRIAL"/>
    <property type="match status" value="1"/>
</dbReference>
<dbReference type="PANTHER" id="PTHR46103:SF1">
    <property type="entry name" value="RRNA METHYLTRANSFERASE 1, MITOCHONDRIAL"/>
    <property type="match status" value="1"/>
</dbReference>
<dbReference type="Pfam" id="PF00588">
    <property type="entry name" value="SpoU_methylase"/>
    <property type="match status" value="1"/>
</dbReference>
<dbReference type="Pfam" id="PF08032">
    <property type="entry name" value="SpoU_sub_bind"/>
    <property type="match status" value="1"/>
</dbReference>
<dbReference type="SUPFAM" id="SSF75217">
    <property type="entry name" value="alpha/beta knot"/>
    <property type="match status" value="1"/>
</dbReference>
<dbReference type="SUPFAM" id="SSF55315">
    <property type="entry name" value="L30e-like"/>
    <property type="match status" value="1"/>
</dbReference>
<proteinExistence type="inferred from homology"/>
<accession>Q76NT0</accession>
<accession>Q54ZH2</accession>
<sequence>MISIFKILSSPKPATTTTNIINPINIINGIRYFSSNQEDYPLFKKPVFNGKVLRGGRKVFKNDLIYSKKESHYNNNNNSNNNSNNNNNNNNSNNRNNNNFSNNRNNNNNRNNNNNNSNRNNNNSNDNNFRNNNNNNRRTEYYKNDFDSSKYISNKPEIRIFDLHEQAVYGINPVWVALSSGNRTFNALYVCGTLLPKLKELGIDIKNIENSKREYISDFDHNYGRETNQIEDENQDEQYSNQHDEQEQNEYEEEQEEEKVQEEEEDNNNNNNIKKTTFNRYNDRKNLVALKEIVKNSFKLKIPVRSVNKGTLDSFSKGRPHQGIILDASPLTLLNIDFLEKFDINERVNKRMNGGGGGGGGGGGNKINNDKYPLWLVLDELWDPQNVGAIIRNCSFFNIDGVVISNKNSSPITPAASKSSSGACESFVINRTESIEGFLKSSQRNGWNVVGTSLDDLNENQPCLDINQIKLDQPTILILGNEGFGLKPSVLEICNKTIKIVGGNYKIDSLNVSVTSGILIHTLLSSGTLPK</sequence>
<reference key="1">
    <citation type="journal article" date="2002" name="Nature">
        <title>Sequence and analysis of chromosome 2 of Dictyostelium discoideum.</title>
        <authorList>
            <person name="Gloeckner G."/>
            <person name="Eichinger L."/>
            <person name="Szafranski K."/>
            <person name="Pachebat J.A."/>
            <person name="Bankier A.T."/>
            <person name="Dear P.H."/>
            <person name="Lehmann R."/>
            <person name="Baumgart C."/>
            <person name="Parra G."/>
            <person name="Abril J.F."/>
            <person name="Guigo R."/>
            <person name="Kumpf K."/>
            <person name="Tunggal B."/>
            <person name="Cox E.C."/>
            <person name="Quail M.A."/>
            <person name="Platzer M."/>
            <person name="Rosenthal A."/>
            <person name="Noegel A.A."/>
        </authorList>
    </citation>
    <scope>NUCLEOTIDE SEQUENCE [LARGE SCALE GENOMIC DNA]</scope>
    <source>
        <strain>AX4</strain>
    </source>
</reference>
<reference key="2">
    <citation type="journal article" date="2005" name="Nature">
        <title>The genome of the social amoeba Dictyostelium discoideum.</title>
        <authorList>
            <person name="Eichinger L."/>
            <person name="Pachebat J.A."/>
            <person name="Gloeckner G."/>
            <person name="Rajandream M.A."/>
            <person name="Sucgang R."/>
            <person name="Berriman M."/>
            <person name="Song J."/>
            <person name="Olsen R."/>
            <person name="Szafranski K."/>
            <person name="Xu Q."/>
            <person name="Tunggal B."/>
            <person name="Kummerfeld S."/>
            <person name="Madera M."/>
            <person name="Konfortov B.A."/>
            <person name="Rivero F."/>
            <person name="Bankier A.T."/>
            <person name="Lehmann R."/>
            <person name="Hamlin N."/>
            <person name="Davies R."/>
            <person name="Gaudet P."/>
            <person name="Fey P."/>
            <person name="Pilcher K."/>
            <person name="Chen G."/>
            <person name="Saunders D."/>
            <person name="Sodergren E.J."/>
            <person name="Davis P."/>
            <person name="Kerhornou A."/>
            <person name="Nie X."/>
            <person name="Hall N."/>
            <person name="Anjard C."/>
            <person name="Hemphill L."/>
            <person name="Bason N."/>
            <person name="Farbrother P."/>
            <person name="Desany B."/>
            <person name="Just E."/>
            <person name="Morio T."/>
            <person name="Rost R."/>
            <person name="Churcher C.M."/>
            <person name="Cooper J."/>
            <person name="Haydock S."/>
            <person name="van Driessche N."/>
            <person name="Cronin A."/>
            <person name="Goodhead I."/>
            <person name="Muzny D.M."/>
            <person name="Mourier T."/>
            <person name="Pain A."/>
            <person name="Lu M."/>
            <person name="Harper D."/>
            <person name="Lindsay R."/>
            <person name="Hauser H."/>
            <person name="James K.D."/>
            <person name="Quiles M."/>
            <person name="Madan Babu M."/>
            <person name="Saito T."/>
            <person name="Buchrieser C."/>
            <person name="Wardroper A."/>
            <person name="Felder M."/>
            <person name="Thangavelu M."/>
            <person name="Johnson D."/>
            <person name="Knights A."/>
            <person name="Loulseged H."/>
            <person name="Mungall K.L."/>
            <person name="Oliver K."/>
            <person name="Price C."/>
            <person name="Quail M.A."/>
            <person name="Urushihara H."/>
            <person name="Hernandez J."/>
            <person name="Rabbinowitsch E."/>
            <person name="Steffen D."/>
            <person name="Sanders M."/>
            <person name="Ma J."/>
            <person name="Kohara Y."/>
            <person name="Sharp S."/>
            <person name="Simmonds M.N."/>
            <person name="Spiegler S."/>
            <person name="Tivey A."/>
            <person name="Sugano S."/>
            <person name="White B."/>
            <person name="Walker D."/>
            <person name="Woodward J.R."/>
            <person name="Winckler T."/>
            <person name="Tanaka Y."/>
            <person name="Shaulsky G."/>
            <person name="Schleicher M."/>
            <person name="Weinstock G.M."/>
            <person name="Rosenthal A."/>
            <person name="Cox E.C."/>
            <person name="Chisholm R.L."/>
            <person name="Gibbs R.A."/>
            <person name="Loomis W.F."/>
            <person name="Platzer M."/>
            <person name="Kay R.R."/>
            <person name="Williams J.G."/>
            <person name="Dear P.H."/>
            <person name="Noegel A.A."/>
            <person name="Barrell B.G."/>
            <person name="Kuspa A."/>
        </authorList>
    </citation>
    <scope>NUCLEOTIDE SEQUENCE [LARGE SCALE GENOMIC DNA]</scope>
    <source>
        <strain>AX4</strain>
    </source>
</reference>
<name>MRM1_DICDI</name>
<organism>
    <name type="scientific">Dictyostelium discoideum</name>
    <name type="common">Social amoeba</name>
    <dbReference type="NCBI Taxonomy" id="44689"/>
    <lineage>
        <taxon>Eukaryota</taxon>
        <taxon>Amoebozoa</taxon>
        <taxon>Evosea</taxon>
        <taxon>Eumycetozoa</taxon>
        <taxon>Dictyostelia</taxon>
        <taxon>Dictyosteliales</taxon>
        <taxon>Dictyosteliaceae</taxon>
        <taxon>Dictyostelium</taxon>
    </lineage>
</organism>
<evidence type="ECO:0000250" key="1">
    <source>
        <dbReference type="UniProtKB" id="P25270"/>
    </source>
</evidence>
<evidence type="ECO:0000255" key="2"/>
<evidence type="ECO:0000256" key="3">
    <source>
        <dbReference type="SAM" id="MobiDB-lite"/>
    </source>
</evidence>
<evidence type="ECO:0000305" key="4"/>
<keyword id="KW-0489">Methyltransferase</keyword>
<keyword id="KW-0496">Mitochondrion</keyword>
<keyword id="KW-1185">Reference proteome</keyword>
<keyword id="KW-0698">rRNA processing</keyword>
<keyword id="KW-0949">S-adenosyl-L-methionine</keyword>
<keyword id="KW-0808">Transferase</keyword>
<keyword id="KW-0809">Transit peptide</keyword>
<protein>
    <recommendedName>
        <fullName evidence="1">rRNA methyltransferase 1, mitochondrial</fullName>
        <ecNumber evidence="1">2.1.1.-</ecNumber>
    </recommendedName>
    <alternativeName>
        <fullName evidence="1">rRNA (guanosine-2'-O)-methyltransferase</fullName>
    </alternativeName>
</protein>
<feature type="transit peptide" description="Mitochondrion" evidence="2">
    <location>
        <begin position="1"/>
        <end position="40"/>
    </location>
</feature>
<feature type="chain" id="PRO_0000337262" description="rRNA methyltransferase 1, mitochondrial">
    <location>
        <begin position="41"/>
        <end position="531"/>
    </location>
</feature>
<feature type="region of interest" description="Disordered" evidence="3">
    <location>
        <begin position="70"/>
        <end position="141"/>
    </location>
</feature>
<feature type="region of interest" description="Disordered" evidence="3">
    <location>
        <begin position="230"/>
        <end position="277"/>
    </location>
</feature>
<feature type="compositionally biased region" description="Low complexity" evidence="3">
    <location>
        <begin position="74"/>
        <end position="136"/>
    </location>
</feature>
<feature type="compositionally biased region" description="Acidic residues" evidence="3">
    <location>
        <begin position="247"/>
        <end position="267"/>
    </location>
</feature>
<comment type="function">
    <text evidence="1">S-adenosyl-L-methionine-dependent 2'-O-ribose methyltransferase that catalyzes the formation of a 2'-O-methylguanosine in the mitochondrial large subunit ribosomal RNA (mtLSU rRNA), a universally conserved modification in the peptidyl transferase domain of the mtLSU rRNA.</text>
</comment>
<comment type="catalytic activity">
    <reaction evidence="1">
        <text>a uridine in rRNA + S-adenosyl-L-methionine = a 2'-O-methyluridine in rRNA + S-adenosyl-L-homocysteine + H(+)</text>
        <dbReference type="Rhea" id="RHEA:54152"/>
        <dbReference type="Rhea" id="RHEA-COMP:13812"/>
        <dbReference type="Rhea" id="RHEA-COMP:13814"/>
        <dbReference type="ChEBI" id="CHEBI:15378"/>
        <dbReference type="ChEBI" id="CHEBI:57856"/>
        <dbReference type="ChEBI" id="CHEBI:59789"/>
        <dbReference type="ChEBI" id="CHEBI:65315"/>
        <dbReference type="ChEBI" id="CHEBI:74478"/>
    </reaction>
</comment>
<comment type="subcellular location">
    <subcellularLocation>
        <location evidence="1">Mitochondrion</location>
    </subcellularLocation>
</comment>
<comment type="similarity">
    <text evidence="4">Belongs to the class IV-like SAM-binding methyltransferase superfamily. RNA methyltransferase TrmH family.</text>
</comment>
<gene>
    <name type="primary">mrm1</name>
    <name type="ORF">DDB_G0277479</name>
</gene>